<accession>A1U342</accession>
<dbReference type="EMBL" id="CP000514">
    <property type="protein sequence ID" value="ABM19411.1"/>
    <property type="molecule type" value="Genomic_DNA"/>
</dbReference>
<dbReference type="RefSeq" id="WP_011785798.1">
    <property type="nucleotide sequence ID" value="NC_008740.1"/>
</dbReference>
<dbReference type="SMR" id="A1U342"/>
<dbReference type="STRING" id="351348.Maqu_2335"/>
<dbReference type="KEGG" id="maq:Maqu_2335"/>
<dbReference type="eggNOG" id="COG0850">
    <property type="taxonomic scope" value="Bacteria"/>
</dbReference>
<dbReference type="HOGENOM" id="CLU_067812_0_1_6"/>
<dbReference type="OrthoDB" id="9794530at2"/>
<dbReference type="Proteomes" id="UP000000998">
    <property type="component" value="Chromosome"/>
</dbReference>
<dbReference type="GO" id="GO:0000902">
    <property type="term" value="P:cell morphogenesis"/>
    <property type="evidence" value="ECO:0007669"/>
    <property type="project" value="InterPro"/>
</dbReference>
<dbReference type="GO" id="GO:0000917">
    <property type="term" value="P:division septum assembly"/>
    <property type="evidence" value="ECO:0007669"/>
    <property type="project" value="UniProtKB-KW"/>
</dbReference>
<dbReference type="GO" id="GO:0051302">
    <property type="term" value="P:regulation of cell division"/>
    <property type="evidence" value="ECO:0007669"/>
    <property type="project" value="InterPro"/>
</dbReference>
<dbReference type="GO" id="GO:1901891">
    <property type="term" value="P:regulation of cell septum assembly"/>
    <property type="evidence" value="ECO:0007669"/>
    <property type="project" value="InterPro"/>
</dbReference>
<dbReference type="Gene3D" id="2.160.20.70">
    <property type="match status" value="1"/>
</dbReference>
<dbReference type="Gene3D" id="3.30.70.260">
    <property type="match status" value="1"/>
</dbReference>
<dbReference type="HAMAP" id="MF_00267">
    <property type="entry name" value="MinC"/>
    <property type="match status" value="1"/>
</dbReference>
<dbReference type="InterPro" id="IPR016098">
    <property type="entry name" value="CAP/MinC_C"/>
</dbReference>
<dbReference type="InterPro" id="IPR013033">
    <property type="entry name" value="MinC"/>
</dbReference>
<dbReference type="InterPro" id="IPR036145">
    <property type="entry name" value="MinC_C_sf"/>
</dbReference>
<dbReference type="InterPro" id="IPR007874">
    <property type="entry name" value="MinC_N"/>
</dbReference>
<dbReference type="InterPro" id="IPR005526">
    <property type="entry name" value="Septum_form_inhib_MinC_C"/>
</dbReference>
<dbReference type="NCBIfam" id="TIGR01222">
    <property type="entry name" value="minC"/>
    <property type="match status" value="1"/>
</dbReference>
<dbReference type="PANTHER" id="PTHR34108">
    <property type="entry name" value="SEPTUM SITE-DETERMINING PROTEIN MINC"/>
    <property type="match status" value="1"/>
</dbReference>
<dbReference type="PANTHER" id="PTHR34108:SF1">
    <property type="entry name" value="SEPTUM SITE-DETERMINING PROTEIN MINC"/>
    <property type="match status" value="1"/>
</dbReference>
<dbReference type="Pfam" id="PF03775">
    <property type="entry name" value="MinC_C"/>
    <property type="match status" value="1"/>
</dbReference>
<dbReference type="Pfam" id="PF05209">
    <property type="entry name" value="MinC_N"/>
    <property type="match status" value="1"/>
</dbReference>
<dbReference type="SUPFAM" id="SSF63848">
    <property type="entry name" value="Cell-division inhibitor MinC, C-terminal domain"/>
    <property type="match status" value="1"/>
</dbReference>
<proteinExistence type="inferred from homology"/>
<name>MINC_MARN8</name>
<organism>
    <name type="scientific">Marinobacter nauticus (strain ATCC 700491 / DSM 11845 / VT8)</name>
    <name type="common">Marinobacter aquaeolei</name>
    <dbReference type="NCBI Taxonomy" id="351348"/>
    <lineage>
        <taxon>Bacteria</taxon>
        <taxon>Pseudomonadati</taxon>
        <taxon>Pseudomonadota</taxon>
        <taxon>Gammaproteobacteria</taxon>
        <taxon>Pseudomonadales</taxon>
        <taxon>Marinobacteraceae</taxon>
        <taxon>Marinobacter</taxon>
    </lineage>
</organism>
<reference key="1">
    <citation type="journal article" date="2011" name="Appl. Environ. Microbiol.">
        <title>Genomic potential of Marinobacter aquaeolei, a biogeochemical 'opportunitroph'.</title>
        <authorList>
            <person name="Singer E."/>
            <person name="Webb E.A."/>
            <person name="Nelson W.C."/>
            <person name="Heidelberg J.F."/>
            <person name="Ivanova N."/>
            <person name="Pati A."/>
            <person name="Edwards K.J."/>
        </authorList>
    </citation>
    <scope>NUCLEOTIDE SEQUENCE [LARGE SCALE GENOMIC DNA]</scope>
    <source>
        <strain>ATCC 700491 / DSM 11845 / VT8</strain>
    </source>
</reference>
<keyword id="KW-0131">Cell cycle</keyword>
<keyword id="KW-0132">Cell division</keyword>
<keyword id="KW-0717">Septation</keyword>
<feature type="chain" id="PRO_1000047835" description="Probable septum site-determining protein MinC">
    <location>
        <begin position="1"/>
        <end position="249"/>
    </location>
</feature>
<feature type="region of interest" description="Disordered" evidence="2">
    <location>
        <begin position="115"/>
        <end position="141"/>
    </location>
</feature>
<feature type="compositionally biased region" description="Low complexity" evidence="2">
    <location>
        <begin position="118"/>
        <end position="141"/>
    </location>
</feature>
<comment type="function">
    <text evidence="1">Cell division inhibitor that blocks the formation of polar Z ring septums. Rapidly oscillates between the poles of the cell to destabilize FtsZ filaments that have formed before they mature into polar Z rings. Prevents FtsZ polymerization.</text>
</comment>
<comment type="subunit">
    <text evidence="1">Interacts with MinD and FtsZ.</text>
</comment>
<comment type="similarity">
    <text evidence="1">Belongs to the MinC family.</text>
</comment>
<evidence type="ECO:0000255" key="1">
    <source>
        <dbReference type="HAMAP-Rule" id="MF_00267"/>
    </source>
</evidence>
<evidence type="ECO:0000256" key="2">
    <source>
        <dbReference type="SAM" id="MobiDB-lite"/>
    </source>
</evidence>
<sequence length="249" mass="26825">MSDSAATDTKQSFQLKSASVSLTALELYYFDNDEFEANLRDKISQAPGFFKDIPLIISLEKYEGLDSELDFFRMIGTCRRHNIHVIGVRAANDDQRRLARGASLALLPGGSLKEKPAQEAPAQAEPEAAAAPEPANEPAPAKIINQPVRSGQQVYAPEGDLIILAPVQAGAEVLAAGNIHVYGPLRGRALAGIHGAESARVFCQSLEAELVSIAGHYKISEDLQDIGWKSAVQIQLRDDVLVVTPLDKA</sequence>
<protein>
    <recommendedName>
        <fullName evidence="1">Probable septum site-determining protein MinC</fullName>
    </recommendedName>
</protein>
<gene>
    <name evidence="1" type="primary">minC</name>
    <name type="ordered locus">Maqu_2335</name>
</gene>